<evidence type="ECO:0000250" key="1"/>
<evidence type="ECO:0000255" key="2">
    <source>
        <dbReference type="HAMAP-Rule" id="MF_00118"/>
    </source>
</evidence>
<sequence>MSKEKFERTKPHVNVGTIGHVDHGKTTLTAAITTVLSKHFGGAARAFDQIDNAPEEKARGITINTSHVEYDTATRHYAHVDCPGHADYVKNMITGAAQMDGAILVVAATDGPMPQTREHILLGRQVGVPYIIVFLNKCDMVDDEELLELVEMEVRELLSQYDFPGDDTPIVRGSALQALNGVAEWEEKILELASHLDNYIPEPERAIDQPFLLPIEDVFSISGRGTVVTGRVERGIIRTGEEVEIVGIKETTKTTVTGVEMFRKLLDEGRAGENIGALLRGTKREEIERGQVLAKPGSITPHTDFESEVYVLSKEEGGRHTPFFKGYRPQFYFRTTDVTGTIELPEGVEMVMPGDNIKMTVSLIHPIAMDQGLRFAIREGGRTVGAGVVAKIIK</sequence>
<protein>
    <recommendedName>
        <fullName evidence="2">Elongation factor Tu</fullName>
        <shortName evidence="2">EF-Tu</shortName>
        <ecNumber evidence="2">3.6.5.3</ecNumber>
    </recommendedName>
</protein>
<name>EFTU_HISS2</name>
<dbReference type="EC" id="3.6.5.3" evidence="2"/>
<dbReference type="EMBL" id="CP000947">
    <property type="protein sequence ID" value="ACA31592.1"/>
    <property type="molecule type" value="Genomic_DNA"/>
</dbReference>
<dbReference type="EMBL" id="CP000947">
    <property type="protein sequence ID" value="ACA32285.1"/>
    <property type="molecule type" value="Genomic_DNA"/>
</dbReference>
<dbReference type="RefSeq" id="WP_011608348.1">
    <property type="nucleotide sequence ID" value="NC_010519.1"/>
</dbReference>
<dbReference type="SMR" id="B0UV21"/>
<dbReference type="STRING" id="228400.HSM_0063"/>
<dbReference type="GeneID" id="31488114"/>
<dbReference type="KEGG" id="hsm:HSM_0063"/>
<dbReference type="KEGG" id="hsm:HSM_1806"/>
<dbReference type="HOGENOM" id="CLU_007265_0_2_6"/>
<dbReference type="GO" id="GO:0005829">
    <property type="term" value="C:cytosol"/>
    <property type="evidence" value="ECO:0007669"/>
    <property type="project" value="TreeGrafter"/>
</dbReference>
<dbReference type="GO" id="GO:0005525">
    <property type="term" value="F:GTP binding"/>
    <property type="evidence" value="ECO:0007669"/>
    <property type="project" value="UniProtKB-UniRule"/>
</dbReference>
<dbReference type="GO" id="GO:0003924">
    <property type="term" value="F:GTPase activity"/>
    <property type="evidence" value="ECO:0007669"/>
    <property type="project" value="InterPro"/>
</dbReference>
<dbReference type="GO" id="GO:0097216">
    <property type="term" value="F:guanosine tetraphosphate binding"/>
    <property type="evidence" value="ECO:0007669"/>
    <property type="project" value="UniProtKB-ARBA"/>
</dbReference>
<dbReference type="GO" id="GO:0003746">
    <property type="term" value="F:translation elongation factor activity"/>
    <property type="evidence" value="ECO:0007669"/>
    <property type="project" value="UniProtKB-UniRule"/>
</dbReference>
<dbReference type="CDD" id="cd01884">
    <property type="entry name" value="EF_Tu"/>
    <property type="match status" value="1"/>
</dbReference>
<dbReference type="CDD" id="cd03697">
    <property type="entry name" value="EFTU_II"/>
    <property type="match status" value="1"/>
</dbReference>
<dbReference type="CDD" id="cd03707">
    <property type="entry name" value="EFTU_III"/>
    <property type="match status" value="1"/>
</dbReference>
<dbReference type="FunFam" id="2.40.30.10:FF:000001">
    <property type="entry name" value="Elongation factor Tu"/>
    <property type="match status" value="1"/>
</dbReference>
<dbReference type="FunFam" id="3.40.50.300:FF:000003">
    <property type="entry name" value="Elongation factor Tu"/>
    <property type="match status" value="1"/>
</dbReference>
<dbReference type="Gene3D" id="3.40.50.300">
    <property type="entry name" value="P-loop containing nucleotide triphosphate hydrolases"/>
    <property type="match status" value="1"/>
</dbReference>
<dbReference type="Gene3D" id="2.40.30.10">
    <property type="entry name" value="Translation factors"/>
    <property type="match status" value="2"/>
</dbReference>
<dbReference type="HAMAP" id="MF_00118_B">
    <property type="entry name" value="EF_Tu_B"/>
    <property type="match status" value="1"/>
</dbReference>
<dbReference type="InterPro" id="IPR041709">
    <property type="entry name" value="EF-Tu_GTP-bd"/>
</dbReference>
<dbReference type="InterPro" id="IPR050055">
    <property type="entry name" value="EF-Tu_GTPase"/>
</dbReference>
<dbReference type="InterPro" id="IPR004161">
    <property type="entry name" value="EFTu-like_2"/>
</dbReference>
<dbReference type="InterPro" id="IPR033720">
    <property type="entry name" value="EFTU_2"/>
</dbReference>
<dbReference type="InterPro" id="IPR031157">
    <property type="entry name" value="G_TR_CS"/>
</dbReference>
<dbReference type="InterPro" id="IPR027417">
    <property type="entry name" value="P-loop_NTPase"/>
</dbReference>
<dbReference type="InterPro" id="IPR005225">
    <property type="entry name" value="Small_GTP-bd"/>
</dbReference>
<dbReference type="InterPro" id="IPR000795">
    <property type="entry name" value="T_Tr_GTP-bd_dom"/>
</dbReference>
<dbReference type="InterPro" id="IPR009000">
    <property type="entry name" value="Transl_B-barrel_sf"/>
</dbReference>
<dbReference type="InterPro" id="IPR009001">
    <property type="entry name" value="Transl_elong_EF1A/Init_IF2_C"/>
</dbReference>
<dbReference type="InterPro" id="IPR004541">
    <property type="entry name" value="Transl_elong_EFTu/EF1A_bac/org"/>
</dbReference>
<dbReference type="InterPro" id="IPR004160">
    <property type="entry name" value="Transl_elong_EFTu/EF1A_C"/>
</dbReference>
<dbReference type="NCBIfam" id="TIGR00485">
    <property type="entry name" value="EF-Tu"/>
    <property type="match status" value="1"/>
</dbReference>
<dbReference type="NCBIfam" id="NF000766">
    <property type="entry name" value="PRK00049.1"/>
    <property type="match status" value="1"/>
</dbReference>
<dbReference type="NCBIfam" id="NF009372">
    <property type="entry name" value="PRK12735.1"/>
    <property type="match status" value="1"/>
</dbReference>
<dbReference type="NCBIfam" id="NF009373">
    <property type="entry name" value="PRK12736.1"/>
    <property type="match status" value="1"/>
</dbReference>
<dbReference type="NCBIfam" id="TIGR00231">
    <property type="entry name" value="small_GTP"/>
    <property type="match status" value="1"/>
</dbReference>
<dbReference type="PANTHER" id="PTHR43721:SF22">
    <property type="entry name" value="ELONGATION FACTOR TU, MITOCHONDRIAL"/>
    <property type="match status" value="1"/>
</dbReference>
<dbReference type="PANTHER" id="PTHR43721">
    <property type="entry name" value="ELONGATION FACTOR TU-RELATED"/>
    <property type="match status" value="1"/>
</dbReference>
<dbReference type="Pfam" id="PF00009">
    <property type="entry name" value="GTP_EFTU"/>
    <property type="match status" value="1"/>
</dbReference>
<dbReference type="Pfam" id="PF03144">
    <property type="entry name" value="GTP_EFTU_D2"/>
    <property type="match status" value="1"/>
</dbReference>
<dbReference type="Pfam" id="PF03143">
    <property type="entry name" value="GTP_EFTU_D3"/>
    <property type="match status" value="1"/>
</dbReference>
<dbReference type="PRINTS" id="PR00315">
    <property type="entry name" value="ELONGATNFCT"/>
</dbReference>
<dbReference type="SUPFAM" id="SSF50465">
    <property type="entry name" value="EF-Tu/eEF-1alpha/eIF2-gamma C-terminal domain"/>
    <property type="match status" value="1"/>
</dbReference>
<dbReference type="SUPFAM" id="SSF52540">
    <property type="entry name" value="P-loop containing nucleoside triphosphate hydrolases"/>
    <property type="match status" value="1"/>
</dbReference>
<dbReference type="SUPFAM" id="SSF50447">
    <property type="entry name" value="Translation proteins"/>
    <property type="match status" value="1"/>
</dbReference>
<dbReference type="PROSITE" id="PS00301">
    <property type="entry name" value="G_TR_1"/>
    <property type="match status" value="1"/>
</dbReference>
<dbReference type="PROSITE" id="PS51722">
    <property type="entry name" value="G_TR_2"/>
    <property type="match status" value="1"/>
</dbReference>
<reference key="1">
    <citation type="submission" date="2008-02" db="EMBL/GenBank/DDBJ databases">
        <title>Complete sequence of Haemophilus somnus 2336.</title>
        <authorList>
            <consortium name="US DOE Joint Genome Institute"/>
            <person name="Siddaramappa S."/>
            <person name="Duncan A.J."/>
            <person name="Challacombe J.F."/>
            <person name="Rainey D."/>
            <person name="Gillaspy A.F."/>
            <person name="Carson M."/>
            <person name="Gipson J."/>
            <person name="Gipson M."/>
            <person name="Bruce D."/>
            <person name="Detter J.C."/>
            <person name="Han C.S."/>
            <person name="Land M."/>
            <person name="Tapia R."/>
            <person name="Thompson L.S."/>
            <person name="Orvis J."/>
            <person name="Zaitshik J."/>
            <person name="Barnes G."/>
            <person name="Brettin T.S."/>
            <person name="Dyer D.W."/>
            <person name="Inzana T.J."/>
        </authorList>
    </citation>
    <scope>NUCLEOTIDE SEQUENCE [LARGE SCALE GENOMIC DNA]</scope>
    <source>
        <strain>2336</strain>
    </source>
</reference>
<comment type="function">
    <text evidence="2">GTP hydrolase that promotes the GTP-dependent binding of aminoacyl-tRNA to the A-site of ribosomes during protein biosynthesis.</text>
</comment>
<comment type="catalytic activity">
    <reaction evidence="2">
        <text>GTP + H2O = GDP + phosphate + H(+)</text>
        <dbReference type="Rhea" id="RHEA:19669"/>
        <dbReference type="ChEBI" id="CHEBI:15377"/>
        <dbReference type="ChEBI" id="CHEBI:15378"/>
        <dbReference type="ChEBI" id="CHEBI:37565"/>
        <dbReference type="ChEBI" id="CHEBI:43474"/>
        <dbReference type="ChEBI" id="CHEBI:58189"/>
        <dbReference type="EC" id="3.6.5.3"/>
    </reaction>
    <physiologicalReaction direction="left-to-right" evidence="2">
        <dbReference type="Rhea" id="RHEA:19670"/>
    </physiologicalReaction>
</comment>
<comment type="subunit">
    <text evidence="2">Monomer.</text>
</comment>
<comment type="subcellular location">
    <subcellularLocation>
        <location evidence="2">Cytoplasm</location>
    </subcellularLocation>
</comment>
<comment type="similarity">
    <text evidence="2">Belongs to the TRAFAC class translation factor GTPase superfamily. Classic translation factor GTPase family. EF-Tu/EF-1A subfamily.</text>
</comment>
<feature type="chain" id="PRO_1000076100" description="Elongation factor Tu">
    <location>
        <begin position="1"/>
        <end position="394"/>
    </location>
</feature>
<feature type="domain" description="tr-type G">
    <location>
        <begin position="10"/>
        <end position="204"/>
    </location>
</feature>
<feature type="region of interest" description="G1" evidence="1">
    <location>
        <begin position="19"/>
        <end position="26"/>
    </location>
</feature>
<feature type="region of interest" description="G2" evidence="1">
    <location>
        <begin position="60"/>
        <end position="64"/>
    </location>
</feature>
<feature type="region of interest" description="G3" evidence="1">
    <location>
        <begin position="81"/>
        <end position="84"/>
    </location>
</feature>
<feature type="region of interest" description="G4" evidence="1">
    <location>
        <begin position="136"/>
        <end position="139"/>
    </location>
</feature>
<feature type="region of interest" description="G5" evidence="1">
    <location>
        <begin position="174"/>
        <end position="176"/>
    </location>
</feature>
<feature type="binding site" evidence="2">
    <location>
        <begin position="19"/>
        <end position="26"/>
    </location>
    <ligand>
        <name>GTP</name>
        <dbReference type="ChEBI" id="CHEBI:37565"/>
    </ligand>
</feature>
<feature type="binding site" evidence="2">
    <location>
        <position position="26"/>
    </location>
    <ligand>
        <name>Mg(2+)</name>
        <dbReference type="ChEBI" id="CHEBI:18420"/>
    </ligand>
</feature>
<feature type="binding site" evidence="2">
    <location>
        <begin position="81"/>
        <end position="85"/>
    </location>
    <ligand>
        <name>GTP</name>
        <dbReference type="ChEBI" id="CHEBI:37565"/>
    </ligand>
</feature>
<feature type="binding site" evidence="2">
    <location>
        <begin position="136"/>
        <end position="139"/>
    </location>
    <ligand>
        <name>GTP</name>
        <dbReference type="ChEBI" id="CHEBI:37565"/>
    </ligand>
</feature>
<keyword id="KW-0963">Cytoplasm</keyword>
<keyword id="KW-0251">Elongation factor</keyword>
<keyword id="KW-0342">GTP-binding</keyword>
<keyword id="KW-0378">Hydrolase</keyword>
<keyword id="KW-0460">Magnesium</keyword>
<keyword id="KW-0479">Metal-binding</keyword>
<keyword id="KW-0547">Nucleotide-binding</keyword>
<keyword id="KW-0648">Protein biosynthesis</keyword>
<organism>
    <name type="scientific">Histophilus somni (strain 2336)</name>
    <name type="common">Haemophilus somnus</name>
    <dbReference type="NCBI Taxonomy" id="228400"/>
    <lineage>
        <taxon>Bacteria</taxon>
        <taxon>Pseudomonadati</taxon>
        <taxon>Pseudomonadota</taxon>
        <taxon>Gammaproteobacteria</taxon>
        <taxon>Pasteurellales</taxon>
        <taxon>Pasteurellaceae</taxon>
        <taxon>Histophilus</taxon>
    </lineage>
</organism>
<accession>B0UV21</accession>
<gene>
    <name evidence="2" type="primary">tuf</name>
    <name type="ordered locus">HSM_0063</name>
    <name type="ordered locus">HSM_1806</name>
</gene>
<proteinExistence type="inferred from homology"/>